<feature type="chain" id="PRO_0000108935" description="Phospho-N-acetylmuramoyl-pentapeptide-transferase">
    <location>
        <begin position="1"/>
        <end position="360"/>
    </location>
</feature>
<feature type="transmembrane region" description="Helical" evidence="1">
    <location>
        <begin position="27"/>
        <end position="47"/>
    </location>
</feature>
<feature type="transmembrane region" description="Helical" evidence="1">
    <location>
        <begin position="72"/>
        <end position="92"/>
    </location>
</feature>
<feature type="transmembrane region" description="Helical" evidence="1">
    <location>
        <begin position="94"/>
        <end position="114"/>
    </location>
</feature>
<feature type="transmembrane region" description="Helical" evidence="1">
    <location>
        <begin position="132"/>
        <end position="152"/>
    </location>
</feature>
<feature type="transmembrane region" description="Helical" evidence="1">
    <location>
        <begin position="168"/>
        <end position="188"/>
    </location>
</feature>
<feature type="transmembrane region" description="Helical" evidence="1">
    <location>
        <begin position="199"/>
        <end position="219"/>
    </location>
</feature>
<feature type="transmembrane region" description="Helical" evidence="1">
    <location>
        <begin position="236"/>
        <end position="256"/>
    </location>
</feature>
<feature type="transmembrane region" description="Helical" evidence="1">
    <location>
        <begin position="263"/>
        <end position="283"/>
    </location>
</feature>
<feature type="transmembrane region" description="Helical" evidence="1">
    <location>
        <begin position="288"/>
        <end position="308"/>
    </location>
</feature>
<feature type="transmembrane region" description="Helical" evidence="1">
    <location>
        <begin position="338"/>
        <end position="358"/>
    </location>
</feature>
<proteinExistence type="inferred from homology"/>
<accession>Q66EK8</accession>
<reference key="1">
    <citation type="journal article" date="2004" name="Proc. Natl. Acad. Sci. U.S.A.">
        <title>Insights into the evolution of Yersinia pestis through whole-genome comparison with Yersinia pseudotuberculosis.</title>
        <authorList>
            <person name="Chain P.S.G."/>
            <person name="Carniel E."/>
            <person name="Larimer F.W."/>
            <person name="Lamerdin J."/>
            <person name="Stoutland P.O."/>
            <person name="Regala W.M."/>
            <person name="Georgescu A.M."/>
            <person name="Vergez L.M."/>
            <person name="Land M.L."/>
            <person name="Motin V.L."/>
            <person name="Brubaker R.R."/>
            <person name="Fowler J."/>
            <person name="Hinnebusch J."/>
            <person name="Marceau M."/>
            <person name="Medigue C."/>
            <person name="Simonet M."/>
            <person name="Chenal-Francisque V."/>
            <person name="Souza B."/>
            <person name="Dacheux D."/>
            <person name="Elliott J.M."/>
            <person name="Derbise A."/>
            <person name="Hauser L.J."/>
            <person name="Garcia E."/>
        </authorList>
    </citation>
    <scope>NUCLEOTIDE SEQUENCE [LARGE SCALE GENOMIC DNA]</scope>
    <source>
        <strain>IP32953</strain>
    </source>
</reference>
<gene>
    <name evidence="1" type="primary">mraY</name>
    <name type="ordered locus">YPTB0685</name>
</gene>
<evidence type="ECO:0000255" key="1">
    <source>
        <dbReference type="HAMAP-Rule" id="MF_00038"/>
    </source>
</evidence>
<dbReference type="EC" id="2.7.8.13" evidence="1"/>
<dbReference type="EMBL" id="BX936398">
    <property type="protein sequence ID" value="CAH19925.1"/>
    <property type="molecule type" value="Genomic_DNA"/>
</dbReference>
<dbReference type="RefSeq" id="WP_002210437.1">
    <property type="nucleotide sequence ID" value="NZ_CP009712.1"/>
</dbReference>
<dbReference type="SMR" id="Q66EK8"/>
<dbReference type="GeneID" id="57974063"/>
<dbReference type="KEGG" id="ypo:BZ17_1870"/>
<dbReference type="KEGG" id="yps:YPTB0685"/>
<dbReference type="PATRIC" id="fig|273123.14.peg.1984"/>
<dbReference type="UniPathway" id="UPA00219"/>
<dbReference type="Proteomes" id="UP000001011">
    <property type="component" value="Chromosome"/>
</dbReference>
<dbReference type="GO" id="GO:0005886">
    <property type="term" value="C:plasma membrane"/>
    <property type="evidence" value="ECO:0007669"/>
    <property type="project" value="UniProtKB-SubCell"/>
</dbReference>
<dbReference type="GO" id="GO:0046872">
    <property type="term" value="F:metal ion binding"/>
    <property type="evidence" value="ECO:0007669"/>
    <property type="project" value="UniProtKB-KW"/>
</dbReference>
<dbReference type="GO" id="GO:0008963">
    <property type="term" value="F:phospho-N-acetylmuramoyl-pentapeptide-transferase activity"/>
    <property type="evidence" value="ECO:0007669"/>
    <property type="project" value="UniProtKB-UniRule"/>
</dbReference>
<dbReference type="GO" id="GO:0051992">
    <property type="term" value="F:UDP-N-acetylmuramoyl-L-alanyl-D-glutamyl-meso-2,6-diaminopimelyl-D-alanyl-D-alanine:undecaprenyl-phosphate transferase activity"/>
    <property type="evidence" value="ECO:0007669"/>
    <property type="project" value="RHEA"/>
</dbReference>
<dbReference type="GO" id="GO:0051301">
    <property type="term" value="P:cell division"/>
    <property type="evidence" value="ECO:0007669"/>
    <property type="project" value="UniProtKB-KW"/>
</dbReference>
<dbReference type="GO" id="GO:0071555">
    <property type="term" value="P:cell wall organization"/>
    <property type="evidence" value="ECO:0007669"/>
    <property type="project" value="UniProtKB-KW"/>
</dbReference>
<dbReference type="GO" id="GO:0009252">
    <property type="term" value="P:peptidoglycan biosynthetic process"/>
    <property type="evidence" value="ECO:0007669"/>
    <property type="project" value="UniProtKB-UniRule"/>
</dbReference>
<dbReference type="GO" id="GO:0008360">
    <property type="term" value="P:regulation of cell shape"/>
    <property type="evidence" value="ECO:0007669"/>
    <property type="project" value="UniProtKB-KW"/>
</dbReference>
<dbReference type="CDD" id="cd06852">
    <property type="entry name" value="GT_MraY"/>
    <property type="match status" value="1"/>
</dbReference>
<dbReference type="HAMAP" id="MF_00038">
    <property type="entry name" value="MraY"/>
    <property type="match status" value="1"/>
</dbReference>
<dbReference type="InterPro" id="IPR000715">
    <property type="entry name" value="Glycosyl_transferase_4"/>
</dbReference>
<dbReference type="InterPro" id="IPR003524">
    <property type="entry name" value="PNAcMuramoyl-5peptid_Trfase"/>
</dbReference>
<dbReference type="InterPro" id="IPR018480">
    <property type="entry name" value="PNAcMuramoyl-5peptid_Trfase_CS"/>
</dbReference>
<dbReference type="NCBIfam" id="TIGR00445">
    <property type="entry name" value="mraY"/>
    <property type="match status" value="1"/>
</dbReference>
<dbReference type="PANTHER" id="PTHR22926">
    <property type="entry name" value="PHOSPHO-N-ACETYLMURAMOYL-PENTAPEPTIDE-TRANSFERASE"/>
    <property type="match status" value="1"/>
</dbReference>
<dbReference type="PANTHER" id="PTHR22926:SF5">
    <property type="entry name" value="PHOSPHO-N-ACETYLMURAMOYL-PENTAPEPTIDE-TRANSFERASE HOMOLOG"/>
    <property type="match status" value="1"/>
</dbReference>
<dbReference type="Pfam" id="PF00953">
    <property type="entry name" value="Glycos_transf_4"/>
    <property type="match status" value="1"/>
</dbReference>
<dbReference type="Pfam" id="PF10555">
    <property type="entry name" value="MraY_sig1"/>
    <property type="match status" value="1"/>
</dbReference>
<dbReference type="PROSITE" id="PS01347">
    <property type="entry name" value="MRAY_1"/>
    <property type="match status" value="1"/>
</dbReference>
<dbReference type="PROSITE" id="PS01348">
    <property type="entry name" value="MRAY_2"/>
    <property type="match status" value="1"/>
</dbReference>
<name>MRAY_YERPS</name>
<keyword id="KW-0131">Cell cycle</keyword>
<keyword id="KW-0132">Cell division</keyword>
<keyword id="KW-0997">Cell inner membrane</keyword>
<keyword id="KW-1003">Cell membrane</keyword>
<keyword id="KW-0133">Cell shape</keyword>
<keyword id="KW-0961">Cell wall biogenesis/degradation</keyword>
<keyword id="KW-0460">Magnesium</keyword>
<keyword id="KW-0472">Membrane</keyword>
<keyword id="KW-0479">Metal-binding</keyword>
<keyword id="KW-0573">Peptidoglycan synthesis</keyword>
<keyword id="KW-0808">Transferase</keyword>
<keyword id="KW-0812">Transmembrane</keyword>
<keyword id="KW-1133">Transmembrane helix</keyword>
<comment type="function">
    <text evidence="1">Catalyzes the initial step of the lipid cycle reactions in the biosynthesis of the cell wall peptidoglycan: transfers peptidoglycan precursor phospho-MurNAc-pentapeptide from UDP-MurNAc-pentapeptide onto the lipid carrier undecaprenyl phosphate, yielding undecaprenyl-pyrophosphoryl-MurNAc-pentapeptide, known as lipid I.</text>
</comment>
<comment type="catalytic activity">
    <reaction evidence="1">
        <text>UDP-N-acetyl-alpha-D-muramoyl-L-alanyl-gamma-D-glutamyl-meso-2,6-diaminopimeloyl-D-alanyl-D-alanine + di-trans,octa-cis-undecaprenyl phosphate = di-trans,octa-cis-undecaprenyl diphospho-N-acetyl-alpha-D-muramoyl-L-alanyl-D-glutamyl-meso-2,6-diaminopimeloyl-D-alanyl-D-alanine + UMP</text>
        <dbReference type="Rhea" id="RHEA:28386"/>
        <dbReference type="ChEBI" id="CHEBI:57865"/>
        <dbReference type="ChEBI" id="CHEBI:60392"/>
        <dbReference type="ChEBI" id="CHEBI:61386"/>
        <dbReference type="ChEBI" id="CHEBI:61387"/>
        <dbReference type="EC" id="2.7.8.13"/>
    </reaction>
</comment>
<comment type="cofactor">
    <cofactor evidence="1">
        <name>Mg(2+)</name>
        <dbReference type="ChEBI" id="CHEBI:18420"/>
    </cofactor>
</comment>
<comment type="pathway">
    <text evidence="1">Cell wall biogenesis; peptidoglycan biosynthesis.</text>
</comment>
<comment type="subcellular location">
    <subcellularLocation>
        <location evidence="1">Cell inner membrane</location>
        <topology evidence="1">Multi-pass membrane protein</topology>
    </subcellularLocation>
</comment>
<comment type="similarity">
    <text evidence="1">Belongs to the glycosyltransferase 4 family. MraY subfamily.</text>
</comment>
<protein>
    <recommendedName>
        <fullName evidence="1">Phospho-N-acetylmuramoyl-pentapeptide-transferase</fullName>
        <ecNumber evidence="1">2.7.8.13</ecNumber>
    </recommendedName>
    <alternativeName>
        <fullName evidence="1">UDP-MurNAc-pentapeptide phosphotransferase</fullName>
    </alternativeName>
</protein>
<sequence length="360" mass="40077">MLVWLAEYLVKFYSGFNVFSYLTFRAIVSLLTALFISLWMGPHLIAWLQKLQIGQVVRNDGPESHFSKRGTPTMGGLMILFSITISVLMWAYPSNPYVWCVLFILIGYGIVGFIDDYRKVVRKNTKGLIARWKYFWQSIIALAAAFTMYSIGKDTSATELVVPFFKDIMPQLGLLYVLLAYFVIVGTSNAVNLTDGLDGLAIMPTVFVAAGFALVAWATGNVNFAAYLHIPYLRHAGELVIVCTAIVGAGLGFLWFNTYPAQVFMGDVGSLALGGALGTIAVLLRQEFLLVIMGGVFVVETLSVILQVGSFKLRGQRIFRMAPIHHHYELKGWPEPRVIVRFWIISLMLVLIGLATLKVR</sequence>
<organism>
    <name type="scientific">Yersinia pseudotuberculosis serotype I (strain IP32953)</name>
    <dbReference type="NCBI Taxonomy" id="273123"/>
    <lineage>
        <taxon>Bacteria</taxon>
        <taxon>Pseudomonadati</taxon>
        <taxon>Pseudomonadota</taxon>
        <taxon>Gammaproteobacteria</taxon>
        <taxon>Enterobacterales</taxon>
        <taxon>Yersiniaceae</taxon>
        <taxon>Yersinia</taxon>
    </lineage>
</organism>